<feature type="chain" id="PRO_0000076953" description="Galactose-binding lectin l-1">
    <location>
        <begin position="1"/>
        <end position="142"/>
    </location>
</feature>
<feature type="domain" description="Galectin" evidence="2">
    <location>
        <begin position="3"/>
        <end position="134"/>
    </location>
</feature>
<feature type="binding site" evidence="1">
    <location>
        <begin position="68"/>
        <end position="74"/>
    </location>
    <ligand>
        <name>a beta-D-galactoside</name>
        <dbReference type="ChEBI" id="CHEBI:28034"/>
    </ligand>
</feature>
<feature type="glycosylation site" description="N-linked (GlcNAc...) asparagine" evidence="1">
    <location>
        <position position="130"/>
    </location>
</feature>
<feature type="sequence conflict" description="In Ref. 1; AA sequence." evidence="6" ref="1">
    <original>Q</original>
    <variation>E</variation>
    <location>
        <position position="72"/>
    </location>
</feature>
<feature type="sequence conflict" description="In Ref. 1; AA sequence." evidence="6" ref="1">
    <original>H</original>
    <variation>HN</variation>
    <location>
        <position position="111"/>
    </location>
</feature>
<feature type="sequence conflict" description="In Ref. 1; AA sequence." evidence="6" ref="1">
    <original>E</original>
    <variation>EQ</variation>
    <location>
        <position position="116"/>
    </location>
</feature>
<feature type="sequence conflict" description="In Ref. 1; AA sequence." evidence="6" ref="1">
    <original>N</original>
    <variation>L</variation>
    <location>
        <position position="134"/>
    </location>
</feature>
<keyword id="KW-0903">Direct protein sequencing</keyword>
<keyword id="KW-0325">Glycoprotein</keyword>
<keyword id="KW-0348">Hemagglutinin</keyword>
<keyword id="KW-0430">Lectin</keyword>
<keyword id="KW-0964">Secreted</keyword>
<evidence type="ECO:0000255" key="1"/>
<evidence type="ECO:0000255" key="2">
    <source>
        <dbReference type="PROSITE-ProRule" id="PRU00639"/>
    </source>
</evidence>
<evidence type="ECO:0000269" key="3">
    <source>
    </source>
</evidence>
<evidence type="ECO:0000269" key="4">
    <source>
    </source>
</evidence>
<evidence type="ECO:0000303" key="5">
    <source>
    </source>
</evidence>
<evidence type="ECO:0000305" key="6"/>
<evidence type="ECO:0000312" key="7">
    <source>
        <dbReference type="EMBL" id="BAC67210.1"/>
    </source>
</evidence>
<comment type="function">
    <text evidence="4">Involved in host defense at the body surface. Causes agglutination of the Gram-positive bacterium S.difficile. Possesses calcium-independent hemagglutinating activity.</text>
</comment>
<comment type="subunit">
    <text evidence="4">Homodimer.</text>
</comment>
<comment type="subcellular location">
    <subcellularLocation>
        <location evidence="3 4">Secreted</location>
    </subcellularLocation>
</comment>
<comment type="tissue specificity">
    <text evidence="3 4">Skin; highest expression in that of individuals showing resistance to infectious disease.</text>
</comment>
<comment type="PTM">
    <text evidence="3 4">The N-terminus is blocked.</text>
</comment>
<comment type="mass spectrometry"/>
<comment type="miscellaneous">
    <text evidence="4">Binds beta-galactoside inhibiting its haemagglutinating activity.</text>
</comment>
<reference evidence="6 7" key="1">
    <citation type="journal article" date="2004" name="Dev. Comp. Immunol.">
        <title>Characteristics and primary structure of a galectin in the skin mucus of the Japanese eel, Anguilla japonica.</title>
        <authorList>
            <person name="Tasumi S."/>
            <person name="Yang W.-J."/>
            <person name="Usami T."/>
            <person name="Tsutsui S."/>
            <person name="Ohira T."/>
            <person name="Kawazoe I."/>
            <person name="Wilder M.N."/>
            <person name="Aida K."/>
            <person name="Suzuki Y."/>
        </authorList>
    </citation>
    <scope>NUCLEOTIDE SEQUENCE [MRNA]</scope>
    <scope>PROTEIN SEQUENCE OF 8-13; 64-73 AND 109-141</scope>
    <scope>FUNCTION</scope>
    <scope>SUBUNIT</scope>
    <scope>SUBCELLULAR LOCATION</scope>
    <scope>TISSUE SPECIFICITY</scope>
    <source>
        <tissue evidence="4">Skin mucus</tissue>
    </source>
</reference>
<reference evidence="6" key="2">
    <citation type="journal article" date="2002" name="J. Biol. Chem.">
        <title>Primary structure and characteristics of a lectin from skin mucus of the Japanese eel Anguilla japonica.</title>
        <authorList>
            <person name="Tasumi S."/>
            <person name="Ohira T."/>
            <person name="Kawazoe I."/>
            <person name="Suetake H."/>
            <person name="Suzuki Y."/>
            <person name="Aida K."/>
        </authorList>
    </citation>
    <scope>SUBCELLULAR LOCATION</scope>
    <scope>TISSUE SPECIFICITY</scope>
    <scope>MASS SPECTROMETRY</scope>
    <source>
        <tissue evidence="3">Skin mucus</tissue>
    </source>
</reference>
<name>AJL1_ANGJA</name>
<gene>
    <name evidence="5" type="primary">l-1</name>
</gene>
<proteinExistence type="evidence at protein level"/>
<accession>Q801X7</accession>
<protein>
    <recommendedName>
        <fullName>Galactose-binding lectin l-1</fullName>
        <shortName>Galectin</shortName>
    </recommendedName>
    <alternativeName>
        <fullName>Ajl-1</fullName>
    </alternativeName>
</protein>
<organism>
    <name type="scientific">Anguilla japonica</name>
    <name type="common">Japanese eel</name>
    <dbReference type="NCBI Taxonomy" id="7937"/>
    <lineage>
        <taxon>Eukaryota</taxon>
        <taxon>Metazoa</taxon>
        <taxon>Chordata</taxon>
        <taxon>Craniata</taxon>
        <taxon>Vertebrata</taxon>
        <taxon>Euteleostomi</taxon>
        <taxon>Actinopterygii</taxon>
        <taxon>Neopterygii</taxon>
        <taxon>Teleostei</taxon>
        <taxon>Anguilliformes</taxon>
        <taxon>Anguillidae</taxon>
        <taxon>Anguilla</taxon>
    </lineage>
</organism>
<dbReference type="EMBL" id="AB098064">
    <property type="protein sequence ID" value="BAC67210.1"/>
    <property type="molecule type" value="mRNA"/>
</dbReference>
<dbReference type="SMR" id="Q801X7"/>
<dbReference type="GlyCosmos" id="Q801X7">
    <property type="glycosylation" value="1 site, No reported glycans"/>
</dbReference>
<dbReference type="GO" id="GO:0005576">
    <property type="term" value="C:extracellular region"/>
    <property type="evidence" value="ECO:0000314"/>
    <property type="project" value="UniProtKB"/>
</dbReference>
<dbReference type="GO" id="GO:0005615">
    <property type="term" value="C:extracellular space"/>
    <property type="evidence" value="ECO:0007669"/>
    <property type="project" value="TreeGrafter"/>
</dbReference>
<dbReference type="GO" id="GO:0030246">
    <property type="term" value="F:carbohydrate binding"/>
    <property type="evidence" value="ECO:0000314"/>
    <property type="project" value="UniProtKB"/>
</dbReference>
<dbReference type="GO" id="GO:0043236">
    <property type="term" value="F:laminin binding"/>
    <property type="evidence" value="ECO:0007669"/>
    <property type="project" value="TreeGrafter"/>
</dbReference>
<dbReference type="GO" id="GO:0050830">
    <property type="term" value="P:defense response to Gram-positive bacterium"/>
    <property type="evidence" value="ECO:0000314"/>
    <property type="project" value="UniProtKB"/>
</dbReference>
<dbReference type="GO" id="GO:0043152">
    <property type="term" value="P:induction of bacterial agglutination"/>
    <property type="evidence" value="ECO:0000314"/>
    <property type="project" value="UniProtKB"/>
</dbReference>
<dbReference type="CDD" id="cd00070">
    <property type="entry name" value="GLECT"/>
    <property type="match status" value="1"/>
</dbReference>
<dbReference type="FunFam" id="2.60.120.200:FF:000021">
    <property type="entry name" value="Galectin"/>
    <property type="match status" value="1"/>
</dbReference>
<dbReference type="Gene3D" id="2.60.120.200">
    <property type="match status" value="1"/>
</dbReference>
<dbReference type="InterPro" id="IPR013320">
    <property type="entry name" value="ConA-like_dom_sf"/>
</dbReference>
<dbReference type="InterPro" id="IPR044156">
    <property type="entry name" value="Galectin-like"/>
</dbReference>
<dbReference type="InterPro" id="IPR001079">
    <property type="entry name" value="Galectin_CRD"/>
</dbReference>
<dbReference type="PANTHER" id="PTHR11346">
    <property type="entry name" value="GALECTIN"/>
    <property type="match status" value="1"/>
</dbReference>
<dbReference type="PANTHER" id="PTHR11346:SF97">
    <property type="entry name" value="GALECTIN-1"/>
    <property type="match status" value="1"/>
</dbReference>
<dbReference type="Pfam" id="PF00337">
    <property type="entry name" value="Gal-bind_lectin"/>
    <property type="match status" value="1"/>
</dbReference>
<dbReference type="SMART" id="SM00908">
    <property type="entry name" value="Gal-bind_lectin"/>
    <property type="match status" value="1"/>
</dbReference>
<dbReference type="SMART" id="SM00276">
    <property type="entry name" value="GLECT"/>
    <property type="match status" value="1"/>
</dbReference>
<dbReference type="SUPFAM" id="SSF49899">
    <property type="entry name" value="Concanavalin A-like lectins/glucanases"/>
    <property type="match status" value="1"/>
</dbReference>
<dbReference type="PROSITE" id="PS51304">
    <property type="entry name" value="GALECTIN"/>
    <property type="match status" value="1"/>
</dbReference>
<sequence>MDFVEVKNLIMKSGMELKVNGVFNANPERFSINVGHSTEEIAVHVDVRFSYLSDKRQLIINHKTGDAWQEEQRDARFPFTAGQAFQVSVVFNFDTFDIYLPDGQVAHFTNHLGAQEYKYIFFVGDATVKNISVNVADKPTKR</sequence>